<keyword id="KW-0378">Hydrolase</keyword>
<keyword id="KW-0964">Secreted</keyword>
<keyword id="KW-0732">Signal</keyword>
<organism>
    <name type="scientific">Burkholderia cenocepacia (strain HI2424)</name>
    <dbReference type="NCBI Taxonomy" id="331272"/>
    <lineage>
        <taxon>Bacteria</taxon>
        <taxon>Pseudomonadati</taxon>
        <taxon>Pseudomonadota</taxon>
        <taxon>Betaproteobacteria</taxon>
        <taxon>Burkholderiales</taxon>
        <taxon>Burkholderiaceae</taxon>
        <taxon>Burkholderia</taxon>
        <taxon>Burkholderia cepacia complex</taxon>
    </lineage>
</organism>
<feature type="signal peptide" evidence="1">
    <location>
        <begin position="1"/>
        <end position="26"/>
    </location>
</feature>
<feature type="chain" id="PRO_5000164646" description="D-(-)-3-hydroxybutyrate oligomer hydrolase">
    <location>
        <begin position="27"/>
        <end position="696"/>
    </location>
</feature>
<feature type="active site" description="Charge relay system" evidence="1">
    <location>
        <position position="309"/>
    </location>
</feature>
<sequence>MTKLGWGRRVVWGAALAAVAMLGACNGDESAERNRLPGFVSGSVRTTAYDGASDDLLTAGLGKTGLAAATAPGFANPSRPTSAELRRLAIWSNYRALVDMSANGGYGRFWGPNVDLDGNDTLGEGKIPGTEYLAYADDGSGSKNVTLLVQVPASFNPAQPCIVTATSSGSRGVYGAISAAGEWALKRGCAVAYNDKGGGNGAHELGSDTVTLIDGTLANAVLAGTASLFTANVTSGDLAAFNSRFPNRYAFKHAHSQQNPEQDWGRVTLQSVEFAYWALNEQFGPVIDGARHGVRYRAGDITTIAASVSNGGGASLAAAEQDNRGWITAVVVGEPQINVRMAPNAVVRAGGQPVPSFGRPLADYATLANLLEPCAAASASLAGAPYLSALPATTTQSIRTQRCATLAAAGLVAGADTQSQAADALAQLHAAGYLADSDLLQAPMWDSQAIPAIAVTYANAYTRSRVTDNLCNFSFATTNPATGVVAAPAASPMPSVFGVGNGVPPTAGINLVFNDGAGTDHRLATPDASFAGALCLRQLWTNGMLGMPANVDAVRVNANLHGKPAIIVQGRSDALVPVNHASRAYVAQNGISEAGRSQLVFYEVTNGQHFDAFLSVPGFDTRFVPVHYYNVQALNLMWRHLKNGAPLPPSQVIRTVPRGGTPGAAPALTSANLPPISTAPGANAIATGVGTIDVPL</sequence>
<comment type="function">
    <text evidence="1">Participates in the degradation of poly-3-hydroxybutyrate (PHB). It works downstream of poly(3-hydroxybutyrate) depolymerase, hydrolyzing D(-)-3-hydroxybutyrate oligomers of various length (3HB-oligomers) into 3HB-monomers.</text>
</comment>
<comment type="catalytic activity">
    <reaction evidence="1">
        <text>(3R)-hydroxybutanoate dimer + H2O = 2 (R)-3-hydroxybutanoate + H(+)</text>
        <dbReference type="Rhea" id="RHEA:10172"/>
        <dbReference type="ChEBI" id="CHEBI:10979"/>
        <dbReference type="ChEBI" id="CHEBI:10983"/>
        <dbReference type="ChEBI" id="CHEBI:15377"/>
        <dbReference type="ChEBI" id="CHEBI:15378"/>
        <dbReference type="EC" id="3.1.1.22"/>
    </reaction>
</comment>
<comment type="pathway">
    <text evidence="1">Lipid metabolism; butanoate metabolism.</text>
</comment>
<comment type="subcellular location">
    <subcellularLocation>
        <location evidence="1">Secreted</location>
    </subcellularLocation>
</comment>
<comment type="similarity">
    <text evidence="1">Belongs to the D-(-)-3-hydroxybutyrate oligomer hydrolase family.</text>
</comment>
<name>HBOH_BURCH</name>
<protein>
    <recommendedName>
        <fullName evidence="1">D-(-)-3-hydroxybutyrate oligomer hydrolase</fullName>
        <shortName evidence="1">3HB-oligomer hydrolase</shortName>
        <shortName evidence="1">3HBOH</shortName>
        <ecNumber evidence="1">3.1.1.22</ecNumber>
    </recommendedName>
</protein>
<reference key="1">
    <citation type="submission" date="2006-08" db="EMBL/GenBank/DDBJ databases">
        <title>Complete sequence of chromosome 1 of Burkholderia cenocepacia HI2424.</title>
        <authorList>
            <person name="Copeland A."/>
            <person name="Lucas S."/>
            <person name="Lapidus A."/>
            <person name="Barry K."/>
            <person name="Detter J.C."/>
            <person name="Glavina del Rio T."/>
            <person name="Hammon N."/>
            <person name="Israni S."/>
            <person name="Pitluck S."/>
            <person name="Chain P."/>
            <person name="Malfatti S."/>
            <person name="Shin M."/>
            <person name="Vergez L."/>
            <person name="Schmutz J."/>
            <person name="Larimer F."/>
            <person name="Land M."/>
            <person name="Hauser L."/>
            <person name="Kyrpides N."/>
            <person name="Kim E."/>
            <person name="LiPuma J.J."/>
            <person name="Gonzalez C.F."/>
            <person name="Konstantinidis K."/>
            <person name="Tiedje J.M."/>
            <person name="Richardson P."/>
        </authorList>
    </citation>
    <scope>NUCLEOTIDE SEQUENCE [LARGE SCALE GENOMIC DNA]</scope>
    <source>
        <strain>HI2424</strain>
    </source>
</reference>
<accession>A0K516</accession>
<proteinExistence type="inferred from homology"/>
<gene>
    <name type="ordered locus">Bcen2424_0840</name>
</gene>
<evidence type="ECO:0000255" key="1">
    <source>
        <dbReference type="HAMAP-Rule" id="MF_01906"/>
    </source>
</evidence>
<dbReference type="EC" id="3.1.1.22" evidence="1"/>
<dbReference type="EMBL" id="CP000458">
    <property type="protein sequence ID" value="ABK07593.1"/>
    <property type="molecule type" value="Genomic_DNA"/>
</dbReference>
<dbReference type="RefSeq" id="WP_011544713.1">
    <property type="nucleotide sequence ID" value="NC_008542.1"/>
</dbReference>
<dbReference type="KEGG" id="bch:Bcen2424_0840"/>
<dbReference type="HOGENOM" id="CLU_420258_0_0_4"/>
<dbReference type="UniPathway" id="UPA00863"/>
<dbReference type="GO" id="GO:0005615">
    <property type="term" value="C:extracellular space"/>
    <property type="evidence" value="ECO:0007669"/>
    <property type="project" value="InterPro"/>
</dbReference>
<dbReference type="GO" id="GO:0047989">
    <property type="term" value="F:hydroxybutyrate-dimer hydrolase activity"/>
    <property type="evidence" value="ECO:0007669"/>
    <property type="project" value="UniProtKB-UniRule"/>
</dbReference>
<dbReference type="GO" id="GO:0019605">
    <property type="term" value="P:butyrate metabolic process"/>
    <property type="evidence" value="ECO:0007669"/>
    <property type="project" value="UniProtKB-UniRule"/>
</dbReference>
<dbReference type="HAMAP" id="MF_01906">
    <property type="entry name" value="3HBOH"/>
    <property type="match status" value="1"/>
</dbReference>
<dbReference type="InterPro" id="IPR016582">
    <property type="entry name" value="OHBut_olig_hydro_put"/>
</dbReference>
<dbReference type="Pfam" id="PF10605">
    <property type="entry name" value="3HBOH"/>
    <property type="match status" value="1"/>
</dbReference>
<dbReference type="PIRSF" id="PIRSF011409">
    <property type="entry name" value="HObutyrate_olig_hydrol"/>
    <property type="match status" value="1"/>
</dbReference>